<proteinExistence type="inferred from homology"/>
<organism>
    <name type="scientific">Methanocorpusculum labreanum (strain ATCC 43576 / DSM 4855 / Z)</name>
    <dbReference type="NCBI Taxonomy" id="410358"/>
    <lineage>
        <taxon>Archaea</taxon>
        <taxon>Methanobacteriati</taxon>
        <taxon>Methanobacteriota</taxon>
        <taxon>Stenosarchaea group</taxon>
        <taxon>Methanomicrobia</taxon>
        <taxon>Methanomicrobiales</taxon>
        <taxon>Methanocorpusculaceae</taxon>
        <taxon>Methanocorpusculum</taxon>
    </lineage>
</organism>
<keyword id="KW-0028">Amino-acid biosynthesis</keyword>
<keyword id="KW-0057">Aromatic amino acid biosynthesis</keyword>
<keyword id="KW-0456">Lyase</keyword>
<keyword id="KW-0663">Pyridoxal phosphate</keyword>
<keyword id="KW-1185">Reference proteome</keyword>
<keyword id="KW-0822">Tryptophan biosynthesis</keyword>
<name>TRPB_METLZ</name>
<comment type="function">
    <text evidence="1">The beta subunit is responsible for the synthesis of L-tryptophan from indole and L-serine.</text>
</comment>
<comment type="catalytic activity">
    <reaction evidence="1">
        <text>(1S,2R)-1-C-(indol-3-yl)glycerol 3-phosphate + L-serine = D-glyceraldehyde 3-phosphate + L-tryptophan + H2O</text>
        <dbReference type="Rhea" id="RHEA:10532"/>
        <dbReference type="ChEBI" id="CHEBI:15377"/>
        <dbReference type="ChEBI" id="CHEBI:33384"/>
        <dbReference type="ChEBI" id="CHEBI:57912"/>
        <dbReference type="ChEBI" id="CHEBI:58866"/>
        <dbReference type="ChEBI" id="CHEBI:59776"/>
        <dbReference type="EC" id="4.2.1.20"/>
    </reaction>
</comment>
<comment type="cofactor">
    <cofactor evidence="1">
        <name>pyridoxal 5'-phosphate</name>
        <dbReference type="ChEBI" id="CHEBI:597326"/>
    </cofactor>
</comment>
<comment type="pathway">
    <text evidence="1">Amino-acid biosynthesis; L-tryptophan biosynthesis; L-tryptophan from chorismate: step 5/5.</text>
</comment>
<comment type="subunit">
    <text evidence="1">Tetramer of two alpha and two beta chains.</text>
</comment>
<comment type="similarity">
    <text evidence="1">Belongs to the TrpB family.</text>
</comment>
<dbReference type="EC" id="4.2.1.20" evidence="1"/>
<dbReference type="EMBL" id="CP000559">
    <property type="protein sequence ID" value="ABN07560.1"/>
    <property type="molecule type" value="Genomic_DNA"/>
</dbReference>
<dbReference type="RefSeq" id="WP_011833763.1">
    <property type="nucleotide sequence ID" value="NC_008942.1"/>
</dbReference>
<dbReference type="SMR" id="A2STA4"/>
<dbReference type="STRING" id="410358.Mlab_1394"/>
<dbReference type="GeneID" id="4795847"/>
<dbReference type="KEGG" id="mla:Mlab_1394"/>
<dbReference type="eggNOG" id="arCOG01433">
    <property type="taxonomic scope" value="Archaea"/>
</dbReference>
<dbReference type="HOGENOM" id="CLU_016734_3_1_2"/>
<dbReference type="OrthoDB" id="371827at2157"/>
<dbReference type="UniPathway" id="UPA00035">
    <property type="reaction ID" value="UER00044"/>
</dbReference>
<dbReference type="Proteomes" id="UP000000365">
    <property type="component" value="Chromosome"/>
</dbReference>
<dbReference type="GO" id="GO:0005737">
    <property type="term" value="C:cytoplasm"/>
    <property type="evidence" value="ECO:0007669"/>
    <property type="project" value="TreeGrafter"/>
</dbReference>
<dbReference type="GO" id="GO:0004834">
    <property type="term" value="F:tryptophan synthase activity"/>
    <property type="evidence" value="ECO:0007669"/>
    <property type="project" value="UniProtKB-UniRule"/>
</dbReference>
<dbReference type="CDD" id="cd06446">
    <property type="entry name" value="Trp-synth_B"/>
    <property type="match status" value="1"/>
</dbReference>
<dbReference type="FunFam" id="3.40.50.1100:FF:000001">
    <property type="entry name" value="Tryptophan synthase beta chain"/>
    <property type="match status" value="1"/>
</dbReference>
<dbReference type="FunFam" id="3.40.50.1100:FF:000004">
    <property type="entry name" value="Tryptophan synthase beta chain"/>
    <property type="match status" value="1"/>
</dbReference>
<dbReference type="Gene3D" id="3.40.50.1100">
    <property type="match status" value="2"/>
</dbReference>
<dbReference type="HAMAP" id="MF_00133">
    <property type="entry name" value="Trp_synth_beta"/>
    <property type="match status" value="1"/>
</dbReference>
<dbReference type="InterPro" id="IPR006653">
    <property type="entry name" value="Trp_synth_b_CS"/>
</dbReference>
<dbReference type="InterPro" id="IPR006654">
    <property type="entry name" value="Trp_synth_beta"/>
</dbReference>
<dbReference type="InterPro" id="IPR023026">
    <property type="entry name" value="Trp_synth_beta/beta-like"/>
</dbReference>
<dbReference type="InterPro" id="IPR001926">
    <property type="entry name" value="TrpB-like_PALP"/>
</dbReference>
<dbReference type="InterPro" id="IPR036052">
    <property type="entry name" value="TrpB-like_PALP_sf"/>
</dbReference>
<dbReference type="NCBIfam" id="TIGR00263">
    <property type="entry name" value="trpB"/>
    <property type="match status" value="1"/>
</dbReference>
<dbReference type="PANTHER" id="PTHR48077:SF3">
    <property type="entry name" value="TRYPTOPHAN SYNTHASE"/>
    <property type="match status" value="1"/>
</dbReference>
<dbReference type="PANTHER" id="PTHR48077">
    <property type="entry name" value="TRYPTOPHAN SYNTHASE-RELATED"/>
    <property type="match status" value="1"/>
</dbReference>
<dbReference type="Pfam" id="PF00291">
    <property type="entry name" value="PALP"/>
    <property type="match status" value="1"/>
</dbReference>
<dbReference type="PIRSF" id="PIRSF001413">
    <property type="entry name" value="Trp_syn_beta"/>
    <property type="match status" value="1"/>
</dbReference>
<dbReference type="SUPFAM" id="SSF53686">
    <property type="entry name" value="Tryptophan synthase beta subunit-like PLP-dependent enzymes"/>
    <property type="match status" value="1"/>
</dbReference>
<dbReference type="PROSITE" id="PS00168">
    <property type="entry name" value="TRP_SYNTHASE_BETA"/>
    <property type="match status" value="1"/>
</dbReference>
<sequence>MKEKTGYYGEFGGRFVPETLMAALYELDSAYHRLKDDPGFKAELNSYLTEFAGRETPLTFCRNMSEYCGCKVYLKREDLVHGGAHKLNNTLGQALLAKAMGKKRLIAETGAGQHGVATAIAGAALNLPVEVFMGEEDCERQKLNVFRMELMGAKVHPVSSGTKTLKDATNEALREWAKTVDYTHYLIGSVVGPHPFPMIVRDFQSVIGEETRRQCLEKEGRLPDTLVACVGGGSNAIGMFYPMLNDDVRMVGVEAGGRALTPGNNGATLNTGSPGILHGALSYLIQNDDGQVGVTHSISAGLDYPGVGPEHSMLKDLNRVEYSYVMDDEVLEAFSYLSRTEGIIPALESAHAVSYVLKNRDSFDRDDIVVICLSGRGDKDVSSVSKMFGGEE</sequence>
<feature type="chain" id="PRO_1000117760" description="Tryptophan synthase beta chain">
    <location>
        <begin position="1"/>
        <end position="392"/>
    </location>
</feature>
<feature type="modified residue" description="N6-(pyridoxal phosphate)lysine" evidence="1">
    <location>
        <position position="86"/>
    </location>
</feature>
<reference key="1">
    <citation type="journal article" date="2009" name="Stand. Genomic Sci.">
        <title>Complete genome sequence of Methanocorpusculum labreanum type strain Z.</title>
        <authorList>
            <person name="Anderson I.J."/>
            <person name="Sieprawska-Lupa M."/>
            <person name="Goltsman E."/>
            <person name="Lapidus A."/>
            <person name="Copeland A."/>
            <person name="Glavina Del Rio T."/>
            <person name="Tice H."/>
            <person name="Dalin E."/>
            <person name="Barry K."/>
            <person name="Pitluck S."/>
            <person name="Hauser L."/>
            <person name="Land M."/>
            <person name="Lucas S."/>
            <person name="Richardson P."/>
            <person name="Whitman W.B."/>
            <person name="Kyrpides N.C."/>
        </authorList>
    </citation>
    <scope>NUCLEOTIDE SEQUENCE [LARGE SCALE GENOMIC DNA]</scope>
    <source>
        <strain>ATCC 43576 / DSM 4855 / Z</strain>
    </source>
</reference>
<gene>
    <name evidence="1" type="primary">trpB</name>
    <name type="ordered locus">Mlab_1394</name>
</gene>
<protein>
    <recommendedName>
        <fullName evidence="1">Tryptophan synthase beta chain</fullName>
        <ecNumber evidence="1">4.2.1.20</ecNumber>
    </recommendedName>
</protein>
<accession>A2STA4</accession>
<evidence type="ECO:0000255" key="1">
    <source>
        <dbReference type="HAMAP-Rule" id="MF_00133"/>
    </source>
</evidence>